<name>YEBV_ECOLI</name>
<accession>P64503</accession>
<accession>P76274</accession>
<accession>Q2MB15</accession>
<feature type="chain" id="PRO_0000169057" description="Uncharacterized protein YebV">
    <location>
        <begin position="1"/>
        <end position="78"/>
    </location>
</feature>
<gene>
    <name type="primary">yebV</name>
    <name type="ordered locus">b1836</name>
    <name type="ordered locus">JW5302</name>
</gene>
<comment type="interaction">
    <interactant intactId="EBI-9126792">
        <id>P64503</id>
    </interactant>
    <interactant intactId="EBI-550170">
        <id>P0A6R3</id>
        <label>fis</label>
    </interactant>
    <organismsDiffer>false</organismsDiffer>
    <experiments>3</experiments>
</comment>
<comment type="interaction">
    <interactant intactId="EBI-9126792">
        <id>P64503</id>
    </interactant>
    <interactant intactId="EBI-1123676">
        <id>P76268</id>
        <label>kdgR</label>
    </interactant>
    <organismsDiffer>false</organismsDiffer>
    <experiments>3</experiments>
</comment>
<comment type="interaction">
    <interactant intactId="EBI-9126792">
        <id>P64503</id>
    </interactant>
    <interactant intactId="EBI-1115258">
        <id>P0ACP7</id>
        <label>purR</label>
    </interactant>
    <organismsDiffer>false</organismsDiffer>
    <experiments>4</experiments>
</comment>
<comment type="interaction">
    <interactant intactId="EBI-9126792">
        <id>P64503</id>
    </interactant>
    <interactant intactId="EBI-1116872">
        <id>P0A8G9</id>
        <label>xseB</label>
    </interactant>
    <organismsDiffer>false</organismsDiffer>
    <experiments>4</experiments>
</comment>
<proteinExistence type="evidence at protein level"/>
<protein>
    <recommendedName>
        <fullName>Uncharacterized protein YebV</fullName>
    </recommendedName>
</protein>
<organism>
    <name type="scientific">Escherichia coli (strain K12)</name>
    <dbReference type="NCBI Taxonomy" id="83333"/>
    <lineage>
        <taxon>Bacteria</taxon>
        <taxon>Pseudomonadati</taxon>
        <taxon>Pseudomonadota</taxon>
        <taxon>Gammaproteobacteria</taxon>
        <taxon>Enterobacterales</taxon>
        <taxon>Enterobacteriaceae</taxon>
        <taxon>Escherichia</taxon>
    </lineage>
</organism>
<reference key="1">
    <citation type="journal article" date="1997" name="Science">
        <title>The complete genome sequence of Escherichia coli K-12.</title>
        <authorList>
            <person name="Blattner F.R."/>
            <person name="Plunkett G. III"/>
            <person name="Bloch C.A."/>
            <person name="Perna N.T."/>
            <person name="Burland V."/>
            <person name="Riley M."/>
            <person name="Collado-Vides J."/>
            <person name="Glasner J.D."/>
            <person name="Rode C.K."/>
            <person name="Mayhew G.F."/>
            <person name="Gregor J."/>
            <person name="Davis N.W."/>
            <person name="Kirkpatrick H.A."/>
            <person name="Goeden M.A."/>
            <person name="Rose D.J."/>
            <person name="Mau B."/>
            <person name="Shao Y."/>
        </authorList>
    </citation>
    <scope>NUCLEOTIDE SEQUENCE [LARGE SCALE GENOMIC DNA]</scope>
    <source>
        <strain>K12 / MG1655 / ATCC 47076</strain>
    </source>
</reference>
<reference key="2">
    <citation type="journal article" date="2006" name="Mol. Syst. Biol.">
        <title>Highly accurate genome sequences of Escherichia coli K-12 strains MG1655 and W3110.</title>
        <authorList>
            <person name="Hayashi K."/>
            <person name="Morooka N."/>
            <person name="Yamamoto Y."/>
            <person name="Fujita K."/>
            <person name="Isono K."/>
            <person name="Choi S."/>
            <person name="Ohtsubo E."/>
            <person name="Baba T."/>
            <person name="Wanner B.L."/>
            <person name="Mori H."/>
            <person name="Horiuchi T."/>
        </authorList>
    </citation>
    <scope>NUCLEOTIDE SEQUENCE [LARGE SCALE GENOMIC DNA]</scope>
    <source>
        <strain>K12 / W3110 / ATCC 27325 / DSM 5911</strain>
    </source>
</reference>
<sequence length="78" mass="8753">MKTSVRIGAFEIDDGELHGESPGDRTLTIPCKSDPDLCMQLDAWDAETSIPALLNGEHSVLYRTRYDQQSDAWIMRLA</sequence>
<dbReference type="EMBL" id="U00096">
    <property type="protein sequence ID" value="AAC74906.2"/>
    <property type="molecule type" value="Genomic_DNA"/>
</dbReference>
<dbReference type="EMBL" id="AP009048">
    <property type="protein sequence ID" value="BAE76541.1"/>
    <property type="molecule type" value="Genomic_DNA"/>
</dbReference>
<dbReference type="RefSeq" id="NP_416350.4">
    <property type="nucleotide sequence ID" value="NC_000913.3"/>
</dbReference>
<dbReference type="RefSeq" id="WP_001295499.1">
    <property type="nucleotide sequence ID" value="NZ_STEB01000009.1"/>
</dbReference>
<dbReference type="SMR" id="P64503"/>
<dbReference type="BioGRID" id="4261598">
    <property type="interactions" value="148"/>
</dbReference>
<dbReference type="BioGRID" id="850704">
    <property type="interactions" value="7"/>
</dbReference>
<dbReference type="DIP" id="DIP-48173N"/>
<dbReference type="FunCoup" id="P64503">
    <property type="interactions" value="38"/>
</dbReference>
<dbReference type="IntAct" id="P64503">
    <property type="interactions" value="6"/>
</dbReference>
<dbReference type="STRING" id="511145.b1836"/>
<dbReference type="jPOST" id="P64503"/>
<dbReference type="PaxDb" id="511145-b1836"/>
<dbReference type="EnsemblBacteria" id="AAC74906">
    <property type="protein sequence ID" value="AAC74906"/>
    <property type="gene ID" value="b1836"/>
</dbReference>
<dbReference type="GeneID" id="946347"/>
<dbReference type="KEGG" id="ecj:JW5302"/>
<dbReference type="KEGG" id="eco:b1836"/>
<dbReference type="KEGG" id="ecoc:C3026_10460"/>
<dbReference type="PATRIC" id="fig|511145.12.peg.1914"/>
<dbReference type="EchoBASE" id="EB3778"/>
<dbReference type="eggNOG" id="ENOG5032TBC">
    <property type="taxonomic scope" value="Bacteria"/>
</dbReference>
<dbReference type="HOGENOM" id="CLU_160612_0_0_6"/>
<dbReference type="InParanoid" id="P64503"/>
<dbReference type="OMA" id="GWDEHTS"/>
<dbReference type="OrthoDB" id="6428563at2"/>
<dbReference type="PhylomeDB" id="P64503"/>
<dbReference type="BioCyc" id="EcoCyc:G7009-MONOMER"/>
<dbReference type="PRO" id="PR:P64503"/>
<dbReference type="Proteomes" id="UP000000625">
    <property type="component" value="Chromosome"/>
</dbReference>
<dbReference type="InterPro" id="IPR009950">
    <property type="entry name" value="DUF1480"/>
</dbReference>
<dbReference type="Pfam" id="PF07351">
    <property type="entry name" value="DUF1480"/>
    <property type="match status" value="1"/>
</dbReference>
<keyword id="KW-1185">Reference proteome</keyword>